<sequence>MIEVLIGLGAGVVGVGAGYLYAKKINDANYNIFLEQAKAKAKAIEYEAELTLKNSKISVQEAEFEAKKRYDDKTTKLQKEYASKFDELTKKEKILLNEQELLNESKELFEKDKQDAKVTYEEGLNLKATYQNKVEEAIRVLEHAAGLTEEEAKEVVLKKVEEKSRADIAHIVRKYEEEAKREAKKRVNYILAQATSRFAGEFAAERLINVVNIKNDELKGRIIGKEGRNIKTLEMVLGVDIIIDDTPHAIILSSFNLYRRAIATRVIELLVEDGRIQPARIEDLHKKVTEEFEQSIQEEGENIVMDLGLNKIHPEIVKLIGKLKFRASYGQNALAHSLEVAHLAGIIAAECGGDEKLAKRAGILHDIGKALTHEYEGSHVDLGAEICKRYKEHPVVINAIYAHHGHEEATSIESAAVCAADALSAARPGARREVLESFLKRVEEIENIAKSKEGIKQAYAINAGREIRVIANAKLINDDEAVLVAKEIAQEIESKVQYPGEIKVSVIRETRAVDFAK</sequence>
<comment type="function">
    <text evidence="1">Endoribonuclease that initiates mRNA decay.</text>
</comment>
<comment type="subcellular location">
    <subcellularLocation>
        <location evidence="1">Cell membrane</location>
        <topology evidence="1">Single-pass membrane protein</topology>
    </subcellularLocation>
</comment>
<comment type="similarity">
    <text evidence="1">Belongs to the RNase Y family.</text>
</comment>
<comment type="sequence caution" evidence="3">
    <conflict type="erroneous initiation">
        <sequence resource="EMBL-CDS" id="EAT97318"/>
    </conflict>
</comment>
<organism>
    <name type="scientific">Campylobacter concisus (strain 13826)</name>
    <dbReference type="NCBI Taxonomy" id="360104"/>
    <lineage>
        <taxon>Bacteria</taxon>
        <taxon>Pseudomonadati</taxon>
        <taxon>Campylobacterota</taxon>
        <taxon>Epsilonproteobacteria</taxon>
        <taxon>Campylobacterales</taxon>
        <taxon>Campylobacteraceae</taxon>
        <taxon>Campylobacter</taxon>
    </lineage>
</organism>
<protein>
    <recommendedName>
        <fullName evidence="1">Ribonuclease Y</fullName>
        <shortName evidence="1">RNase Y</shortName>
        <ecNumber evidence="1">3.1.-.-</ecNumber>
    </recommendedName>
</protein>
<reference key="1">
    <citation type="submission" date="2007-10" db="EMBL/GenBank/DDBJ databases">
        <title>Genome sequence of Campylobacter concisus 13826 isolated from human feces.</title>
        <authorList>
            <person name="Fouts D.E."/>
            <person name="Mongodin E.F."/>
            <person name="Puiu D."/>
            <person name="Sebastian Y."/>
            <person name="Miller W.G."/>
            <person name="Mandrell R.E."/>
            <person name="On S."/>
            <person name="Nelson K.E."/>
        </authorList>
    </citation>
    <scope>NUCLEOTIDE SEQUENCE [LARGE SCALE GENOMIC DNA]</scope>
    <source>
        <strain>13826</strain>
    </source>
</reference>
<accession>A7ZDR5</accession>
<proteinExistence type="inferred from homology"/>
<evidence type="ECO:0000255" key="1">
    <source>
        <dbReference type="HAMAP-Rule" id="MF_00335"/>
    </source>
</evidence>
<evidence type="ECO:0000255" key="2">
    <source>
        <dbReference type="PROSITE-ProRule" id="PRU01175"/>
    </source>
</evidence>
<evidence type="ECO:0000305" key="3"/>
<gene>
    <name evidence="1" type="primary">rny</name>
    <name type="ordered locus">Ccon26_10650</name>
    <name type="ORF">CCC13826_1309</name>
</gene>
<keyword id="KW-1003">Cell membrane</keyword>
<keyword id="KW-0255">Endonuclease</keyword>
<keyword id="KW-0378">Hydrolase</keyword>
<keyword id="KW-0472">Membrane</keyword>
<keyword id="KW-0540">Nuclease</keyword>
<keyword id="KW-0694">RNA-binding</keyword>
<keyword id="KW-0812">Transmembrane</keyword>
<keyword id="KW-1133">Transmembrane helix</keyword>
<feature type="chain" id="PRO_0000344832" description="Ribonuclease Y">
    <location>
        <begin position="1"/>
        <end position="517"/>
    </location>
</feature>
<feature type="transmembrane region" description="Helical" evidence="1">
    <location>
        <begin position="1"/>
        <end position="21"/>
    </location>
</feature>
<feature type="domain" description="KH" evidence="1">
    <location>
        <begin position="207"/>
        <end position="273"/>
    </location>
</feature>
<feature type="domain" description="HD" evidence="2">
    <location>
        <begin position="333"/>
        <end position="426"/>
    </location>
</feature>
<dbReference type="EC" id="3.1.-.-" evidence="1"/>
<dbReference type="EMBL" id="CP000792">
    <property type="protein sequence ID" value="EAT97318.2"/>
    <property type="status" value="ALT_INIT"/>
    <property type="molecule type" value="Genomic_DNA"/>
</dbReference>
<dbReference type="RefSeq" id="WP_034901872.1">
    <property type="nucleotide sequence ID" value="NC_009802.2"/>
</dbReference>
<dbReference type="SMR" id="A7ZDR5"/>
<dbReference type="STRING" id="360104.CCC13826_1309"/>
<dbReference type="KEGG" id="cco:CCC13826_1309"/>
<dbReference type="eggNOG" id="COG1418">
    <property type="taxonomic scope" value="Bacteria"/>
</dbReference>
<dbReference type="HOGENOM" id="CLU_028328_1_0_7"/>
<dbReference type="OrthoDB" id="9803205at2"/>
<dbReference type="Proteomes" id="UP000001121">
    <property type="component" value="Chromosome"/>
</dbReference>
<dbReference type="GO" id="GO:0005886">
    <property type="term" value="C:plasma membrane"/>
    <property type="evidence" value="ECO:0007669"/>
    <property type="project" value="UniProtKB-SubCell"/>
</dbReference>
<dbReference type="GO" id="GO:0003723">
    <property type="term" value="F:RNA binding"/>
    <property type="evidence" value="ECO:0007669"/>
    <property type="project" value="UniProtKB-UniRule"/>
</dbReference>
<dbReference type="GO" id="GO:0004521">
    <property type="term" value="F:RNA endonuclease activity"/>
    <property type="evidence" value="ECO:0007669"/>
    <property type="project" value="UniProtKB-UniRule"/>
</dbReference>
<dbReference type="GO" id="GO:0006402">
    <property type="term" value="P:mRNA catabolic process"/>
    <property type="evidence" value="ECO:0007669"/>
    <property type="project" value="UniProtKB-UniRule"/>
</dbReference>
<dbReference type="CDD" id="cd00077">
    <property type="entry name" value="HDc"/>
    <property type="match status" value="1"/>
</dbReference>
<dbReference type="CDD" id="cd22431">
    <property type="entry name" value="KH-I_RNaseY"/>
    <property type="match status" value="1"/>
</dbReference>
<dbReference type="Gene3D" id="1.10.3210.10">
    <property type="entry name" value="Hypothetical protein af1432"/>
    <property type="match status" value="1"/>
</dbReference>
<dbReference type="Gene3D" id="3.30.1370.10">
    <property type="entry name" value="K Homology domain, type 1"/>
    <property type="match status" value="1"/>
</dbReference>
<dbReference type="HAMAP" id="MF_00335">
    <property type="entry name" value="RNase_Y"/>
    <property type="match status" value="1"/>
</dbReference>
<dbReference type="InterPro" id="IPR003607">
    <property type="entry name" value="HD/PDEase_dom"/>
</dbReference>
<dbReference type="InterPro" id="IPR006674">
    <property type="entry name" value="HD_domain"/>
</dbReference>
<dbReference type="InterPro" id="IPR006675">
    <property type="entry name" value="HDIG_dom"/>
</dbReference>
<dbReference type="InterPro" id="IPR036612">
    <property type="entry name" value="KH_dom_type_1_sf"/>
</dbReference>
<dbReference type="InterPro" id="IPR017705">
    <property type="entry name" value="Ribonuclease_Y"/>
</dbReference>
<dbReference type="InterPro" id="IPR022711">
    <property type="entry name" value="RNase_Y_N"/>
</dbReference>
<dbReference type="NCBIfam" id="TIGR00277">
    <property type="entry name" value="HDIG"/>
    <property type="match status" value="1"/>
</dbReference>
<dbReference type="NCBIfam" id="TIGR03319">
    <property type="entry name" value="RNase_Y"/>
    <property type="match status" value="1"/>
</dbReference>
<dbReference type="PANTHER" id="PTHR12826">
    <property type="entry name" value="RIBONUCLEASE Y"/>
    <property type="match status" value="1"/>
</dbReference>
<dbReference type="PANTHER" id="PTHR12826:SF15">
    <property type="entry name" value="RIBONUCLEASE Y"/>
    <property type="match status" value="1"/>
</dbReference>
<dbReference type="Pfam" id="PF01966">
    <property type="entry name" value="HD"/>
    <property type="match status" value="1"/>
</dbReference>
<dbReference type="Pfam" id="PF12072">
    <property type="entry name" value="RNase_Y_N"/>
    <property type="match status" value="1"/>
</dbReference>
<dbReference type="SMART" id="SM00471">
    <property type="entry name" value="HDc"/>
    <property type="match status" value="1"/>
</dbReference>
<dbReference type="SUPFAM" id="SSF54791">
    <property type="entry name" value="Eukaryotic type KH-domain (KH-domain type I)"/>
    <property type="match status" value="1"/>
</dbReference>
<dbReference type="SUPFAM" id="SSF109604">
    <property type="entry name" value="HD-domain/PDEase-like"/>
    <property type="match status" value="1"/>
</dbReference>
<dbReference type="PROSITE" id="PS51831">
    <property type="entry name" value="HD"/>
    <property type="match status" value="1"/>
</dbReference>
<name>RNY_CAMC1</name>